<dbReference type="EMBL" id="U83458">
    <property type="protein sequence ID" value="AAB41232.1"/>
    <property type="molecule type" value="mRNA"/>
</dbReference>
<dbReference type="SMR" id="P79211"/>
<dbReference type="STRING" id="9940.ENSOARP00000016097"/>
<dbReference type="PaxDb" id="9940-ENSOARP00000016097"/>
<dbReference type="eggNOG" id="KOG3656">
    <property type="taxonomic scope" value="Eukaryota"/>
</dbReference>
<dbReference type="Proteomes" id="UP000002356">
    <property type="component" value="Unplaced"/>
</dbReference>
<dbReference type="GO" id="GO:0005886">
    <property type="term" value="C:plasma membrane"/>
    <property type="evidence" value="ECO:0007669"/>
    <property type="project" value="UniProtKB-SubCell"/>
</dbReference>
<dbReference type="GO" id="GO:0004983">
    <property type="term" value="F:neuropeptide Y receptor activity"/>
    <property type="evidence" value="ECO:0007669"/>
    <property type="project" value="InterPro"/>
</dbReference>
<dbReference type="Gene3D" id="1.20.1070.10">
    <property type="entry name" value="Rhodopsin 7-helix transmembrane proteins"/>
    <property type="match status" value="1"/>
</dbReference>
<dbReference type="InterPro" id="IPR000276">
    <property type="entry name" value="GPCR_Rhodpsn"/>
</dbReference>
<dbReference type="InterPro" id="IPR017452">
    <property type="entry name" value="GPCR_Rhodpsn_7TM"/>
</dbReference>
<dbReference type="InterPro" id="IPR001358">
    <property type="entry name" value="NPY2_rcpt"/>
</dbReference>
<dbReference type="PANTHER" id="PTHR24235">
    <property type="entry name" value="NEUROPEPTIDE Y RECEPTOR"/>
    <property type="match status" value="1"/>
</dbReference>
<dbReference type="PANTHER" id="PTHR24235:SF20">
    <property type="entry name" value="NEUROPEPTIDE Y RECEPTOR TYPE 2"/>
    <property type="match status" value="1"/>
</dbReference>
<dbReference type="Pfam" id="PF00001">
    <property type="entry name" value="7tm_1"/>
    <property type="match status" value="1"/>
</dbReference>
<dbReference type="PRINTS" id="PR00237">
    <property type="entry name" value="GPCRRHODOPSN"/>
</dbReference>
<dbReference type="PRINTS" id="PR01014">
    <property type="entry name" value="NRPEPTIDEY2R"/>
</dbReference>
<dbReference type="SUPFAM" id="SSF81321">
    <property type="entry name" value="Family A G protein-coupled receptor-like"/>
    <property type="match status" value="1"/>
</dbReference>
<dbReference type="PROSITE" id="PS00237">
    <property type="entry name" value="G_PROTEIN_RECEP_F1_1"/>
    <property type="match status" value="1"/>
</dbReference>
<dbReference type="PROSITE" id="PS50262">
    <property type="entry name" value="G_PROTEIN_RECEP_F1_2"/>
    <property type="match status" value="1"/>
</dbReference>
<organism>
    <name type="scientific">Ovis aries</name>
    <name type="common">Sheep</name>
    <dbReference type="NCBI Taxonomy" id="9940"/>
    <lineage>
        <taxon>Eukaryota</taxon>
        <taxon>Metazoa</taxon>
        <taxon>Chordata</taxon>
        <taxon>Craniata</taxon>
        <taxon>Vertebrata</taxon>
        <taxon>Euteleostomi</taxon>
        <taxon>Mammalia</taxon>
        <taxon>Eutheria</taxon>
        <taxon>Laurasiatheria</taxon>
        <taxon>Artiodactyla</taxon>
        <taxon>Ruminantia</taxon>
        <taxon>Pecora</taxon>
        <taxon>Bovidae</taxon>
        <taxon>Caprinae</taxon>
        <taxon>Ovis</taxon>
    </lineage>
</organism>
<evidence type="ECO:0000255" key="1"/>
<evidence type="ECO:0000255" key="2">
    <source>
        <dbReference type="PROSITE-ProRule" id="PRU00521"/>
    </source>
</evidence>
<accession>P79211</accession>
<gene>
    <name type="primary">NPY2R</name>
</gene>
<sequence length="146" mass="16315">KMGPVLCHLVPYAQGLAVQVSTITLTVIALDRHRCIVYHLESKISKQISFLIIGLAWGVSALLASPLAIFREYSLIEIIPDFEIVACTEKWPGEEKGIYGTVYSLLSLLILYVLPLGIISFSYARIWSKLKNHVSPGAAHDHYHQR</sequence>
<reference key="1">
    <citation type="journal article" date="1997" name="Domest. Anim. Endocrinol.">
        <title>cDNA cloning and tissue-specific gene expression of ovine leptin, NPY-Y1 receptor, and NPY-Y2 receptor.</title>
        <authorList>
            <person name="Dyer C.J."/>
            <person name="Simmons J.M."/>
            <person name="Matteri R.L."/>
            <person name="Keisler D.H."/>
        </authorList>
    </citation>
    <scope>NUCLEOTIDE SEQUENCE [MRNA]</scope>
    <source>
        <tissue>Hypothalamus</tissue>
    </source>
</reference>
<proteinExistence type="evidence at transcript level"/>
<name>NPY2R_SHEEP</name>
<protein>
    <recommendedName>
        <fullName>Neuropeptide Y receptor type 2</fullName>
        <shortName>NPY2-R</shortName>
    </recommendedName>
    <alternativeName>
        <fullName>NPY-Y2 receptor</fullName>
        <shortName>Y2 receptor</shortName>
    </alternativeName>
</protein>
<keyword id="KW-1003">Cell membrane</keyword>
<keyword id="KW-1015">Disulfide bond</keyword>
<keyword id="KW-0297">G-protein coupled receptor</keyword>
<keyword id="KW-0449">Lipoprotein</keyword>
<keyword id="KW-0472">Membrane</keyword>
<keyword id="KW-0564">Palmitate</keyword>
<keyword id="KW-0675">Receptor</keyword>
<keyword id="KW-1185">Reference proteome</keyword>
<keyword id="KW-0807">Transducer</keyword>
<keyword id="KW-0812">Transmembrane</keyword>
<keyword id="KW-1133">Transmembrane helix</keyword>
<feature type="chain" id="PRO_0000069933" description="Neuropeptide Y receptor type 2">
    <location>
        <begin position="1" status="less than"/>
        <end position="146" status="greater than"/>
    </location>
</feature>
<feature type="topological domain" description="Extracellular" evidence="1">
    <location>
        <begin position="1" status="less than"/>
        <end position="8"/>
    </location>
</feature>
<feature type="transmembrane region" description="Helical; Name=3" evidence="1">
    <location>
        <begin position="9"/>
        <end position="29"/>
    </location>
</feature>
<feature type="topological domain" description="Cytoplasmic" evidence="1">
    <location>
        <begin position="30"/>
        <end position="49"/>
    </location>
</feature>
<feature type="transmembrane region" description="Helical; Name=4" evidence="1">
    <location>
        <begin position="50"/>
        <end position="70"/>
    </location>
</feature>
<feature type="topological domain" description="Extracellular" evidence="1">
    <location>
        <begin position="71"/>
        <end position="100"/>
    </location>
</feature>
<feature type="transmembrane region" description="Helical; Name=5" evidence="1">
    <location>
        <begin position="101"/>
        <end position="121"/>
    </location>
</feature>
<feature type="topological domain" description="Cytoplasmic" evidence="1">
    <location>
        <begin position="122"/>
        <end position="146" status="greater than"/>
    </location>
</feature>
<feature type="disulfide bond" evidence="2">
    <location>
        <begin position="7"/>
        <end position="87"/>
    </location>
</feature>
<feature type="non-terminal residue">
    <location>
        <position position="1"/>
    </location>
</feature>
<feature type="non-terminal residue">
    <location>
        <position position="146"/>
    </location>
</feature>
<comment type="function">
    <text>Receptor for neuropeptide Y and peptide YY.</text>
</comment>
<comment type="subcellular location">
    <subcellularLocation>
        <location>Cell membrane</location>
        <topology>Multi-pass membrane protein</topology>
    </subcellularLocation>
</comment>
<comment type="similarity">
    <text evidence="2">Belongs to the G-protein coupled receptor 1 family.</text>
</comment>